<comment type="function">
    <text evidence="1">Catalyzes the dephosphorylation of undecaprenyl diphosphate (UPP). Confers resistance to bacitracin.</text>
</comment>
<comment type="catalytic activity">
    <reaction evidence="1">
        <text>di-trans,octa-cis-undecaprenyl diphosphate + H2O = di-trans,octa-cis-undecaprenyl phosphate + phosphate + H(+)</text>
        <dbReference type="Rhea" id="RHEA:28094"/>
        <dbReference type="ChEBI" id="CHEBI:15377"/>
        <dbReference type="ChEBI" id="CHEBI:15378"/>
        <dbReference type="ChEBI" id="CHEBI:43474"/>
        <dbReference type="ChEBI" id="CHEBI:58405"/>
        <dbReference type="ChEBI" id="CHEBI:60392"/>
        <dbReference type="EC" id="3.6.1.27"/>
    </reaction>
</comment>
<comment type="subcellular location">
    <subcellularLocation>
        <location evidence="1">Cell membrane</location>
        <topology evidence="1">Multi-pass membrane protein</topology>
    </subcellularLocation>
</comment>
<comment type="miscellaneous">
    <text>Bacitracin is thought to be involved in the inhibition of peptidoglycan synthesis by sequestering undecaprenyl diphosphate, thereby reducing the pool of lipid carrier available.</text>
</comment>
<comment type="similarity">
    <text evidence="1">Belongs to the UppP family.</text>
</comment>
<organism>
    <name type="scientific">Mycobacterium bovis (strain ATCC BAA-935 / AF2122/97)</name>
    <dbReference type="NCBI Taxonomy" id="233413"/>
    <lineage>
        <taxon>Bacteria</taxon>
        <taxon>Bacillati</taxon>
        <taxon>Actinomycetota</taxon>
        <taxon>Actinomycetes</taxon>
        <taxon>Mycobacteriales</taxon>
        <taxon>Mycobacteriaceae</taxon>
        <taxon>Mycobacterium</taxon>
        <taxon>Mycobacterium tuberculosis complex</taxon>
    </lineage>
</organism>
<accession>Q7VEQ2</accession>
<accession>A0A1R3Y0Q4</accession>
<accession>X2BK90</accession>
<sequence length="276" mass="29719">MSWWQVIVLAAAQGLTEFLPVSSSGHLAIVSRIFFSGDAGASFTAVSQLGTEAAVVIYFARDIVRILSAWVHGLVVKAHRNTDYRLGWYVIIGTIPICILGLFFKDDIRSGVRNLWVVVTALVVFSGVIALAEYVGRQSRHIERLTWRDAVVVGIAQTLALVPGVSRSGSTISAGLFLGLDRELAARFGFLLAIPAVFASGLFSLPDAFHPVTEGMSATGPQLLVATLIAFVLGLTAVAWLLRFLVRHNMYWFVGYRVLVGTGMLVLLATGTVAAT</sequence>
<evidence type="ECO:0000255" key="1">
    <source>
        <dbReference type="HAMAP-Rule" id="MF_01006"/>
    </source>
</evidence>
<feature type="chain" id="PRO_0000151163" description="Undecaprenyl-diphosphatase">
    <location>
        <begin position="1"/>
        <end position="276"/>
    </location>
</feature>
<feature type="transmembrane region" description="Helical" evidence="1">
    <location>
        <begin position="84"/>
        <end position="104"/>
    </location>
</feature>
<feature type="transmembrane region" description="Helical" evidence="1">
    <location>
        <begin position="115"/>
        <end position="135"/>
    </location>
</feature>
<feature type="transmembrane region" description="Helical" evidence="1">
    <location>
        <begin position="188"/>
        <end position="208"/>
    </location>
</feature>
<feature type="transmembrane region" description="Helical" evidence="1">
    <location>
        <begin position="222"/>
        <end position="242"/>
    </location>
</feature>
<feature type="transmembrane region" description="Helical" evidence="1">
    <location>
        <begin position="250"/>
        <end position="270"/>
    </location>
</feature>
<keyword id="KW-0046">Antibiotic resistance</keyword>
<keyword id="KW-1003">Cell membrane</keyword>
<keyword id="KW-0133">Cell shape</keyword>
<keyword id="KW-0961">Cell wall biogenesis/degradation</keyword>
<keyword id="KW-0378">Hydrolase</keyword>
<keyword id="KW-0472">Membrane</keyword>
<keyword id="KW-0573">Peptidoglycan synthesis</keyword>
<keyword id="KW-1185">Reference proteome</keyword>
<keyword id="KW-0812">Transmembrane</keyword>
<keyword id="KW-1133">Transmembrane helix</keyword>
<reference key="1">
    <citation type="journal article" date="2003" name="Proc. Natl. Acad. Sci. U.S.A.">
        <title>The complete genome sequence of Mycobacterium bovis.</title>
        <authorList>
            <person name="Garnier T."/>
            <person name="Eiglmeier K."/>
            <person name="Camus J.-C."/>
            <person name="Medina N."/>
            <person name="Mansoor H."/>
            <person name="Pryor M."/>
            <person name="Duthoy S."/>
            <person name="Grondin S."/>
            <person name="Lacroix C."/>
            <person name="Monsempe C."/>
            <person name="Simon S."/>
            <person name="Harris B."/>
            <person name="Atkin R."/>
            <person name="Doggett J."/>
            <person name="Mayes R."/>
            <person name="Keating L."/>
            <person name="Wheeler P.R."/>
            <person name="Parkhill J."/>
            <person name="Barrell B.G."/>
            <person name="Cole S.T."/>
            <person name="Gordon S.V."/>
            <person name="Hewinson R.G."/>
        </authorList>
    </citation>
    <scope>NUCLEOTIDE SEQUENCE [LARGE SCALE GENOMIC DNA]</scope>
    <source>
        <strain>ATCC BAA-935 / AF2122/97</strain>
    </source>
</reference>
<reference key="2">
    <citation type="journal article" date="2017" name="Genome Announc.">
        <title>Updated reference genome sequence and annotation of Mycobacterium bovis AF2122/97.</title>
        <authorList>
            <person name="Malone K.M."/>
            <person name="Farrell D."/>
            <person name="Stuber T.P."/>
            <person name="Schubert O.T."/>
            <person name="Aebersold R."/>
            <person name="Robbe-Austerman S."/>
            <person name="Gordon S.V."/>
        </authorList>
    </citation>
    <scope>NUCLEOTIDE SEQUENCE [LARGE SCALE GENOMIC DNA]</scope>
    <scope>GENOME REANNOTATION</scope>
    <source>
        <strain>ATCC BAA-935 / AF2122/97</strain>
    </source>
</reference>
<gene>
    <name evidence="1" type="primary">uppP</name>
    <name type="synonym">bacA</name>
    <name type="synonym">upk</name>
    <name type="ordered locus">BQ2027_MB2160C</name>
</gene>
<dbReference type="EC" id="3.6.1.27" evidence="1"/>
<dbReference type="EMBL" id="LT708304">
    <property type="protein sequence ID" value="SIU00767.1"/>
    <property type="molecule type" value="Genomic_DNA"/>
</dbReference>
<dbReference type="RefSeq" id="NP_855809.1">
    <property type="nucleotide sequence ID" value="NC_002945.3"/>
</dbReference>
<dbReference type="RefSeq" id="WP_010950663.1">
    <property type="nucleotide sequence ID" value="NC_002945.4"/>
</dbReference>
<dbReference type="SMR" id="Q7VEQ2"/>
<dbReference type="KEGG" id="mbo:BQ2027_MB2160C"/>
<dbReference type="PATRIC" id="fig|233413.5.peg.2374"/>
<dbReference type="Proteomes" id="UP000001419">
    <property type="component" value="Chromosome"/>
</dbReference>
<dbReference type="GO" id="GO:0005886">
    <property type="term" value="C:plasma membrane"/>
    <property type="evidence" value="ECO:0007669"/>
    <property type="project" value="UniProtKB-SubCell"/>
</dbReference>
<dbReference type="GO" id="GO:0050380">
    <property type="term" value="F:undecaprenyl-diphosphatase activity"/>
    <property type="evidence" value="ECO:0007669"/>
    <property type="project" value="UniProtKB-UniRule"/>
</dbReference>
<dbReference type="GO" id="GO:0071555">
    <property type="term" value="P:cell wall organization"/>
    <property type="evidence" value="ECO:0007669"/>
    <property type="project" value="UniProtKB-KW"/>
</dbReference>
<dbReference type="GO" id="GO:0009252">
    <property type="term" value="P:peptidoglycan biosynthetic process"/>
    <property type="evidence" value="ECO:0007669"/>
    <property type="project" value="UniProtKB-KW"/>
</dbReference>
<dbReference type="GO" id="GO:0008360">
    <property type="term" value="P:regulation of cell shape"/>
    <property type="evidence" value="ECO:0007669"/>
    <property type="project" value="UniProtKB-KW"/>
</dbReference>
<dbReference type="GO" id="GO:0046677">
    <property type="term" value="P:response to antibiotic"/>
    <property type="evidence" value="ECO:0007669"/>
    <property type="project" value="UniProtKB-UniRule"/>
</dbReference>
<dbReference type="HAMAP" id="MF_01006">
    <property type="entry name" value="Undec_diphosphatase"/>
    <property type="match status" value="1"/>
</dbReference>
<dbReference type="InterPro" id="IPR003824">
    <property type="entry name" value="UppP"/>
</dbReference>
<dbReference type="NCBIfam" id="NF001392">
    <property type="entry name" value="PRK00281.2-1"/>
    <property type="match status" value="1"/>
</dbReference>
<dbReference type="NCBIfam" id="TIGR00753">
    <property type="entry name" value="undec_PP_bacA"/>
    <property type="match status" value="1"/>
</dbReference>
<dbReference type="PANTHER" id="PTHR30622">
    <property type="entry name" value="UNDECAPRENYL-DIPHOSPHATASE"/>
    <property type="match status" value="1"/>
</dbReference>
<dbReference type="PANTHER" id="PTHR30622:SF4">
    <property type="entry name" value="UNDECAPRENYL-DIPHOSPHATASE"/>
    <property type="match status" value="1"/>
</dbReference>
<dbReference type="Pfam" id="PF02673">
    <property type="entry name" value="BacA"/>
    <property type="match status" value="1"/>
</dbReference>
<protein>
    <recommendedName>
        <fullName evidence="1">Undecaprenyl-diphosphatase</fullName>
        <ecNumber evidence="1">3.6.1.27</ecNumber>
    </recommendedName>
    <alternativeName>
        <fullName evidence="1">Bacitracin resistance protein</fullName>
    </alternativeName>
    <alternativeName>
        <fullName evidence="1">Undecaprenyl pyrophosphate phosphatase</fullName>
    </alternativeName>
</protein>
<proteinExistence type="inferred from homology"/>
<name>UPPP_MYCBO</name>